<comment type="function">
    <text evidence="1">DNA-dependent RNA polymerase (RNAP) catalyzes the transcription of DNA into RNA using the four ribonucleoside triphosphates as substrates.</text>
</comment>
<comment type="catalytic activity">
    <reaction evidence="1">
        <text>RNA(n) + a ribonucleoside 5'-triphosphate = RNA(n+1) + diphosphate</text>
        <dbReference type="Rhea" id="RHEA:21248"/>
        <dbReference type="Rhea" id="RHEA-COMP:14527"/>
        <dbReference type="Rhea" id="RHEA-COMP:17342"/>
        <dbReference type="ChEBI" id="CHEBI:33019"/>
        <dbReference type="ChEBI" id="CHEBI:61557"/>
        <dbReference type="ChEBI" id="CHEBI:140395"/>
        <dbReference type="EC" id="2.7.7.6"/>
    </reaction>
</comment>
<comment type="subunit">
    <text evidence="1">Part of the RNA polymerase complex.</text>
</comment>
<comment type="subcellular location">
    <subcellularLocation>
        <location evidence="1">Cytoplasm</location>
    </subcellularLocation>
</comment>
<comment type="similarity">
    <text evidence="1">Belongs to the archaeal Rpo3/eukaryotic RPB3 RNA polymerase subunit family.</text>
</comment>
<accession>A3MXZ5</accession>
<gene>
    <name evidence="1" type="primary">rpo3</name>
    <name evidence="1" type="synonym">rpoD</name>
    <name type="ordered locus">Pcal_2097</name>
</gene>
<protein>
    <recommendedName>
        <fullName evidence="1">DNA-directed RNA polymerase subunit Rpo3</fullName>
        <ecNumber evidence="1">2.7.7.6</ecNumber>
    </recommendedName>
    <alternativeName>
        <fullName evidence="1">DNA-directed RNA polymerase subunit D</fullName>
    </alternativeName>
</protein>
<sequence length="258" mass="28896">MPKVSIVEKSQFFAKAVVEGVPPSLINSLRRVIISELPVLAIDSVVVVNNTSVMYDEMLAHRLGLIPLTTPLKDLPPIEDCESGLVDPSECTVRLTLQVNATGDVVVYAGDLVADRPDVAPVYKDIPIVKLVEGQSVVVEAYAKLGRARDHAKWQAALASYYYYPKVVVKREECREMCKEVCRNLENPLECTFNKATTCKEMCGGGIVVEWEKDKYVFWIESFGNYDAETALREAFRILKKKFEDFLDALSRKAEAKL</sequence>
<organism>
    <name type="scientific">Pyrobaculum calidifontis (strain DSM 21063 / JCM 11548 / VA1)</name>
    <dbReference type="NCBI Taxonomy" id="410359"/>
    <lineage>
        <taxon>Archaea</taxon>
        <taxon>Thermoproteota</taxon>
        <taxon>Thermoprotei</taxon>
        <taxon>Thermoproteales</taxon>
        <taxon>Thermoproteaceae</taxon>
        <taxon>Pyrobaculum</taxon>
    </lineage>
</organism>
<name>RPO3_PYRCJ</name>
<reference key="1">
    <citation type="submission" date="2007-02" db="EMBL/GenBank/DDBJ databases">
        <title>Complete sequence of Pyrobaculum calidifontis JCM 11548.</title>
        <authorList>
            <consortium name="US DOE Joint Genome Institute"/>
            <person name="Copeland A."/>
            <person name="Lucas S."/>
            <person name="Lapidus A."/>
            <person name="Barry K."/>
            <person name="Glavina del Rio T."/>
            <person name="Dalin E."/>
            <person name="Tice H."/>
            <person name="Pitluck S."/>
            <person name="Chain P."/>
            <person name="Malfatti S."/>
            <person name="Shin M."/>
            <person name="Vergez L."/>
            <person name="Schmutz J."/>
            <person name="Larimer F."/>
            <person name="Land M."/>
            <person name="Hauser L."/>
            <person name="Kyrpides N."/>
            <person name="Mikhailova N."/>
            <person name="Cozen A.E."/>
            <person name="Fitz-Gibbon S.T."/>
            <person name="House C.H."/>
            <person name="Saltikov C."/>
            <person name="Lowe T.M."/>
            <person name="Richardson P."/>
        </authorList>
    </citation>
    <scope>NUCLEOTIDE SEQUENCE [LARGE SCALE GENOMIC DNA]</scope>
    <source>
        <strain>DSM 21063 / JCM 11548 / VA1</strain>
    </source>
</reference>
<proteinExistence type="inferred from homology"/>
<keyword id="KW-0963">Cytoplasm</keyword>
<keyword id="KW-0240">DNA-directed RNA polymerase</keyword>
<keyword id="KW-0548">Nucleotidyltransferase</keyword>
<keyword id="KW-0804">Transcription</keyword>
<keyword id="KW-0808">Transferase</keyword>
<feature type="chain" id="PRO_1000005791" description="DNA-directed RNA polymerase subunit Rpo3">
    <location>
        <begin position="1"/>
        <end position="258"/>
    </location>
</feature>
<dbReference type="EC" id="2.7.7.6" evidence="1"/>
<dbReference type="EMBL" id="CP000561">
    <property type="protein sequence ID" value="ABO09512.1"/>
    <property type="molecule type" value="Genomic_DNA"/>
</dbReference>
<dbReference type="RefSeq" id="WP_011850770.1">
    <property type="nucleotide sequence ID" value="NC_009073.1"/>
</dbReference>
<dbReference type="SMR" id="A3MXZ5"/>
<dbReference type="STRING" id="410359.Pcal_2097"/>
<dbReference type="GeneID" id="4910199"/>
<dbReference type="KEGG" id="pcl:Pcal_2097"/>
<dbReference type="eggNOG" id="arCOG04241">
    <property type="taxonomic scope" value="Archaea"/>
</dbReference>
<dbReference type="HOGENOM" id="CLU_038421_3_1_2"/>
<dbReference type="OrthoDB" id="84933at2157"/>
<dbReference type="Proteomes" id="UP000001431">
    <property type="component" value="Chromosome"/>
</dbReference>
<dbReference type="GO" id="GO:0005737">
    <property type="term" value="C:cytoplasm"/>
    <property type="evidence" value="ECO:0007669"/>
    <property type="project" value="UniProtKB-SubCell"/>
</dbReference>
<dbReference type="GO" id="GO:0000428">
    <property type="term" value="C:DNA-directed RNA polymerase complex"/>
    <property type="evidence" value="ECO:0007669"/>
    <property type="project" value="UniProtKB-KW"/>
</dbReference>
<dbReference type="GO" id="GO:0003677">
    <property type="term" value="F:DNA binding"/>
    <property type="evidence" value="ECO:0007669"/>
    <property type="project" value="UniProtKB-UniRule"/>
</dbReference>
<dbReference type="GO" id="GO:0003899">
    <property type="term" value="F:DNA-directed RNA polymerase activity"/>
    <property type="evidence" value="ECO:0007669"/>
    <property type="project" value="UniProtKB-UniRule"/>
</dbReference>
<dbReference type="GO" id="GO:0046983">
    <property type="term" value="F:protein dimerization activity"/>
    <property type="evidence" value="ECO:0007669"/>
    <property type="project" value="InterPro"/>
</dbReference>
<dbReference type="GO" id="GO:0006351">
    <property type="term" value="P:DNA-templated transcription"/>
    <property type="evidence" value="ECO:0007669"/>
    <property type="project" value="UniProtKB-UniRule"/>
</dbReference>
<dbReference type="Gene3D" id="3.30.70.3110">
    <property type="match status" value="1"/>
</dbReference>
<dbReference type="Gene3D" id="2.170.120.12">
    <property type="entry name" value="DNA-directed RNA polymerase, insert domain"/>
    <property type="match status" value="1"/>
</dbReference>
<dbReference type="Gene3D" id="3.30.1360.10">
    <property type="entry name" value="RNA polymerase, RBP11-like subunit"/>
    <property type="match status" value="1"/>
</dbReference>
<dbReference type="HAMAP" id="MF_00320">
    <property type="entry name" value="RNApol_arch_Rpo3"/>
    <property type="match status" value="1"/>
</dbReference>
<dbReference type="InterPro" id="IPR001514">
    <property type="entry name" value="DNA-dir_RNA_pol_30-40kDasu_CS"/>
</dbReference>
<dbReference type="InterPro" id="IPR011262">
    <property type="entry name" value="DNA-dir_RNA_pol_insert"/>
</dbReference>
<dbReference type="InterPro" id="IPR011263">
    <property type="entry name" value="DNA-dir_RNA_pol_RpoA/D/Rpb3"/>
</dbReference>
<dbReference type="InterPro" id="IPR036603">
    <property type="entry name" value="RBP11-like"/>
</dbReference>
<dbReference type="InterPro" id="IPR022842">
    <property type="entry name" value="RNAP_Rpo3/Rpb3/RPAC1"/>
</dbReference>
<dbReference type="InterPro" id="IPR036643">
    <property type="entry name" value="RNApol_insert_sf"/>
</dbReference>
<dbReference type="InterPro" id="IPR050518">
    <property type="entry name" value="Rpo3/RPB3_RNA_Pol_subunit"/>
</dbReference>
<dbReference type="NCBIfam" id="NF001988">
    <property type="entry name" value="PRK00783.1"/>
    <property type="match status" value="1"/>
</dbReference>
<dbReference type="PANTHER" id="PTHR11800">
    <property type="entry name" value="DNA-DIRECTED RNA POLYMERASE"/>
    <property type="match status" value="1"/>
</dbReference>
<dbReference type="PANTHER" id="PTHR11800:SF2">
    <property type="entry name" value="DNA-DIRECTED RNA POLYMERASE II SUBUNIT RPB3"/>
    <property type="match status" value="1"/>
</dbReference>
<dbReference type="Pfam" id="PF01000">
    <property type="entry name" value="RNA_pol_A_bac"/>
    <property type="match status" value="1"/>
</dbReference>
<dbReference type="Pfam" id="PF01193">
    <property type="entry name" value="RNA_pol_L"/>
    <property type="match status" value="1"/>
</dbReference>
<dbReference type="SMART" id="SM00662">
    <property type="entry name" value="RPOLD"/>
    <property type="match status" value="1"/>
</dbReference>
<dbReference type="SUPFAM" id="SSF56553">
    <property type="entry name" value="Insert subdomain of RNA polymerase alpha subunit"/>
    <property type="match status" value="1"/>
</dbReference>
<dbReference type="SUPFAM" id="SSF55257">
    <property type="entry name" value="RBP11-like subunits of RNA polymerase"/>
    <property type="match status" value="1"/>
</dbReference>
<dbReference type="PROSITE" id="PS00446">
    <property type="entry name" value="RNA_POL_D_30KD"/>
    <property type="match status" value="1"/>
</dbReference>
<evidence type="ECO:0000255" key="1">
    <source>
        <dbReference type="HAMAP-Rule" id="MF_00320"/>
    </source>
</evidence>